<reference key="1">
    <citation type="journal article" date="2009" name="Nature">
        <title>Evolution of pathogenicity and sexual reproduction in eight Candida genomes.</title>
        <authorList>
            <person name="Butler G."/>
            <person name="Rasmussen M.D."/>
            <person name="Lin M.F."/>
            <person name="Santos M.A.S."/>
            <person name="Sakthikumar S."/>
            <person name="Munro C.A."/>
            <person name="Rheinbay E."/>
            <person name="Grabherr M."/>
            <person name="Forche A."/>
            <person name="Reedy J.L."/>
            <person name="Agrafioti I."/>
            <person name="Arnaud M.B."/>
            <person name="Bates S."/>
            <person name="Brown A.J.P."/>
            <person name="Brunke S."/>
            <person name="Costanzo M.C."/>
            <person name="Fitzpatrick D.A."/>
            <person name="de Groot P.W.J."/>
            <person name="Harris D."/>
            <person name="Hoyer L.L."/>
            <person name="Hube B."/>
            <person name="Klis F.M."/>
            <person name="Kodira C."/>
            <person name="Lennard N."/>
            <person name="Logue M.E."/>
            <person name="Martin R."/>
            <person name="Neiman A.M."/>
            <person name="Nikolaou E."/>
            <person name="Quail M.A."/>
            <person name="Quinn J."/>
            <person name="Santos M.C."/>
            <person name="Schmitzberger F.F."/>
            <person name="Sherlock G."/>
            <person name="Shah P."/>
            <person name="Silverstein K.A.T."/>
            <person name="Skrzypek M.S."/>
            <person name="Soll D."/>
            <person name="Staggs R."/>
            <person name="Stansfield I."/>
            <person name="Stumpf M.P.H."/>
            <person name="Sudbery P.E."/>
            <person name="Srikantha T."/>
            <person name="Zeng Q."/>
            <person name="Berman J."/>
            <person name="Berriman M."/>
            <person name="Heitman J."/>
            <person name="Gow N.A.R."/>
            <person name="Lorenz M.C."/>
            <person name="Birren B.W."/>
            <person name="Kellis M."/>
            <person name="Cuomo C.A."/>
        </authorList>
    </citation>
    <scope>NUCLEOTIDE SEQUENCE [LARGE SCALE GENOMIC DNA]</scope>
    <source>
        <strain>ATCC 11503 / BCRC 21390 / CBS 2605 / JCM 1781 / NBRC 1676 / NRRL YB-4239</strain>
    </source>
</reference>
<protein>
    <recommendedName>
        <fullName>Autophagy-related protein 8</fullName>
    </recommendedName>
    <alternativeName>
        <fullName>Autophagy-related ubiquitin-like modifier ATG8</fullName>
    </alternativeName>
</protein>
<evidence type="ECO:0000250" key="1">
    <source>
        <dbReference type="UniProtKB" id="P38182"/>
    </source>
</evidence>
<evidence type="ECO:0000305" key="2"/>
<gene>
    <name type="primary">ATG8</name>
    <name type="ORF">LELG_01722</name>
</gene>
<organism>
    <name type="scientific">Lodderomyces elongisporus (strain ATCC 11503 / CBS 2605 / JCM 1781 / NBRC 1676 / NRRL YB-4239)</name>
    <name type="common">Yeast</name>
    <name type="synonym">Saccharomyces elongisporus</name>
    <dbReference type="NCBI Taxonomy" id="379508"/>
    <lineage>
        <taxon>Eukaryota</taxon>
        <taxon>Fungi</taxon>
        <taxon>Dikarya</taxon>
        <taxon>Ascomycota</taxon>
        <taxon>Saccharomycotina</taxon>
        <taxon>Pichiomycetes</taxon>
        <taxon>Debaryomycetaceae</taxon>
        <taxon>Candida/Lodderomyces clade</taxon>
        <taxon>Lodderomyces</taxon>
    </lineage>
</organism>
<dbReference type="EMBL" id="CH981525">
    <property type="protein sequence ID" value="EDK43544.1"/>
    <property type="molecule type" value="Genomic_DNA"/>
</dbReference>
<dbReference type="RefSeq" id="XP_001526894.1">
    <property type="nucleotide sequence ID" value="XM_001526844.1"/>
</dbReference>
<dbReference type="SMR" id="A5DWI6"/>
<dbReference type="FunCoup" id="A5DWI6">
    <property type="interactions" value="553"/>
</dbReference>
<dbReference type="STRING" id="379508.A5DWI6"/>
<dbReference type="GeneID" id="5234515"/>
<dbReference type="KEGG" id="lel:PVL30_001695"/>
<dbReference type="VEuPathDB" id="FungiDB:LELG_01722"/>
<dbReference type="eggNOG" id="KOG1654">
    <property type="taxonomic scope" value="Eukaryota"/>
</dbReference>
<dbReference type="HOGENOM" id="CLU_119276_0_0_1"/>
<dbReference type="InParanoid" id="A5DWI6"/>
<dbReference type="OMA" id="AVYQEHK"/>
<dbReference type="OrthoDB" id="6738456at2759"/>
<dbReference type="Proteomes" id="UP000001996">
    <property type="component" value="Unassembled WGS sequence"/>
</dbReference>
<dbReference type="GO" id="GO:0000421">
    <property type="term" value="C:autophagosome membrane"/>
    <property type="evidence" value="ECO:0007669"/>
    <property type="project" value="UniProtKB-SubCell"/>
</dbReference>
<dbReference type="GO" id="GO:0031410">
    <property type="term" value="C:cytoplasmic vesicle"/>
    <property type="evidence" value="ECO:0007669"/>
    <property type="project" value="UniProtKB-KW"/>
</dbReference>
<dbReference type="GO" id="GO:0006914">
    <property type="term" value="P:autophagy"/>
    <property type="evidence" value="ECO:0007669"/>
    <property type="project" value="UniProtKB-KW"/>
</dbReference>
<dbReference type="GO" id="GO:0015031">
    <property type="term" value="P:protein transport"/>
    <property type="evidence" value="ECO:0007669"/>
    <property type="project" value="UniProtKB-KW"/>
</dbReference>
<dbReference type="CDD" id="cd16128">
    <property type="entry name" value="Ubl_ATG8"/>
    <property type="match status" value="1"/>
</dbReference>
<dbReference type="FunFam" id="3.10.20.90:FF:000010">
    <property type="entry name" value="Autophagy-related protein"/>
    <property type="match status" value="1"/>
</dbReference>
<dbReference type="Gene3D" id="3.10.20.90">
    <property type="entry name" value="Phosphatidylinositol 3-kinase Catalytic Subunit, Chain A, domain 1"/>
    <property type="match status" value="1"/>
</dbReference>
<dbReference type="InterPro" id="IPR004241">
    <property type="entry name" value="Atg8-like"/>
</dbReference>
<dbReference type="InterPro" id="IPR029071">
    <property type="entry name" value="Ubiquitin-like_domsf"/>
</dbReference>
<dbReference type="PANTHER" id="PTHR10969">
    <property type="entry name" value="MICROTUBULE-ASSOCIATED PROTEINS 1A/1B LIGHT CHAIN 3-RELATED"/>
    <property type="match status" value="1"/>
</dbReference>
<dbReference type="Pfam" id="PF02991">
    <property type="entry name" value="ATG8"/>
    <property type="match status" value="1"/>
</dbReference>
<dbReference type="SUPFAM" id="SSF54236">
    <property type="entry name" value="Ubiquitin-like"/>
    <property type="match status" value="1"/>
</dbReference>
<keyword id="KW-0072">Autophagy</keyword>
<keyword id="KW-0968">Cytoplasmic vesicle</keyword>
<keyword id="KW-0449">Lipoprotein</keyword>
<keyword id="KW-0472">Membrane</keyword>
<keyword id="KW-0653">Protein transport</keyword>
<keyword id="KW-1185">Reference proteome</keyword>
<keyword id="KW-0813">Transport</keyword>
<keyword id="KW-0833">Ubl conjugation pathway</keyword>
<keyword id="KW-0926">Vacuole</keyword>
<name>ATG8_LODEL</name>
<comment type="function">
    <text evidence="1">Ubiquitin-like modifier involved in autophagosome formation. With ATG4, mediates the delivery of the autophagosomes to the vacuole via the microtubule cytoskeleton. Required for selective autophagic degradation of the nucleus (nucleophagy) as well as for mitophagy which contributes to regulate mitochondrial quantity and quality by eliminating the mitochondria to a basal level to fulfill cellular energy requirements and preventing excess ROS production. Participates also in membrane fusion events that take place in the early secretory pathway. Also involved in endoplasmic reticulum-specific autophagic process and is essential for the survival of cells subjected to severe ER stress. The ATG8-PE conjugate mediates tethering between adjacent membranes and stimulates membrane hemifusion, leading to expansion of the autophagosomal membrane during autophagy.</text>
</comment>
<comment type="subcellular location">
    <subcellularLocation>
        <location evidence="1">Cytoplasmic vesicle</location>
        <location evidence="1">Autophagosome membrane</location>
        <topology evidence="1">Lipid-anchor</topology>
    </subcellularLocation>
    <subcellularLocation>
        <location evidence="1">Vacuole membrane</location>
        <topology evidence="1">Lipid-anchor</topology>
    </subcellularLocation>
</comment>
<comment type="PTM">
    <text evidence="1">The C-terminal 30 residues are removed by ATG4 to expose Gly-116 at the C-terminus. The c-terminal Gly is then amidated with phosphatidylethanolamine by an activating system similar to that for ubiquitin.</text>
</comment>
<comment type="similarity">
    <text evidence="2">Belongs to the ATG8 family.</text>
</comment>
<proteinExistence type="inferred from homology"/>
<sequence length="146" mass="16863">MRSQFKDEHPFEKRQAEAARIAQRFKDRVPVICEKVENSDIPEIDKRKYLVPVDLTVGQFVYVIRKRIKLPSEKAIFIFVNDILPPTAALISTIYEEHKDDDGFLYVLYSGENTFGEQNEKEDGKVKKIPIDISELDFSCINEPGV</sequence>
<accession>A5DWI6</accession>
<feature type="chain" id="PRO_0000317890" description="Autophagy-related protein 8">
    <location>
        <begin position="1"/>
        <end position="116"/>
    </location>
</feature>
<feature type="propeptide" id="PRO_0000317891" description="Removed in mature form" evidence="1">
    <location>
        <begin position="117"/>
        <end position="146"/>
    </location>
</feature>
<feature type="site" description="Cleavage; by ATG4" evidence="1">
    <location>
        <begin position="116"/>
        <end position="117"/>
    </location>
</feature>
<feature type="lipid moiety-binding region" description="Phosphatidylethanolamine amidated glycine" evidence="1">
    <location>
        <position position="116"/>
    </location>
</feature>